<gene>
    <name evidence="1" type="primary">thrS</name>
    <name type="ordered locus">GbCGDNIH1_1614</name>
</gene>
<feature type="chain" id="PRO_1000020396" description="Threonine--tRNA ligase">
    <location>
        <begin position="1"/>
        <end position="642"/>
    </location>
</feature>
<feature type="domain" description="TGS" evidence="2">
    <location>
        <begin position="1"/>
        <end position="61"/>
    </location>
</feature>
<feature type="region of interest" description="Catalytic" evidence="1">
    <location>
        <begin position="243"/>
        <end position="536"/>
    </location>
</feature>
<feature type="binding site" evidence="1">
    <location>
        <position position="336"/>
    </location>
    <ligand>
        <name>Zn(2+)</name>
        <dbReference type="ChEBI" id="CHEBI:29105"/>
    </ligand>
</feature>
<feature type="binding site" evidence="1">
    <location>
        <position position="387"/>
    </location>
    <ligand>
        <name>Zn(2+)</name>
        <dbReference type="ChEBI" id="CHEBI:29105"/>
    </ligand>
</feature>
<feature type="binding site" evidence="1">
    <location>
        <position position="513"/>
    </location>
    <ligand>
        <name>Zn(2+)</name>
        <dbReference type="ChEBI" id="CHEBI:29105"/>
    </ligand>
</feature>
<protein>
    <recommendedName>
        <fullName evidence="1">Threonine--tRNA ligase</fullName>
        <ecNumber evidence="1">6.1.1.3</ecNumber>
    </recommendedName>
    <alternativeName>
        <fullName evidence="1">Threonyl-tRNA synthetase</fullName>
        <shortName evidence="1">ThrRS</shortName>
    </alternativeName>
</protein>
<proteinExistence type="inferred from homology"/>
<keyword id="KW-0030">Aminoacyl-tRNA synthetase</keyword>
<keyword id="KW-0067">ATP-binding</keyword>
<keyword id="KW-0963">Cytoplasm</keyword>
<keyword id="KW-0436">Ligase</keyword>
<keyword id="KW-0479">Metal-binding</keyword>
<keyword id="KW-0547">Nucleotide-binding</keyword>
<keyword id="KW-0648">Protein biosynthesis</keyword>
<keyword id="KW-1185">Reference proteome</keyword>
<keyword id="KW-0694">RNA-binding</keyword>
<keyword id="KW-0820">tRNA-binding</keyword>
<keyword id="KW-0862">Zinc</keyword>
<organism>
    <name type="scientific">Granulibacter bethesdensis (strain ATCC BAA-1260 / CGDNIH1)</name>
    <dbReference type="NCBI Taxonomy" id="391165"/>
    <lineage>
        <taxon>Bacteria</taxon>
        <taxon>Pseudomonadati</taxon>
        <taxon>Pseudomonadota</taxon>
        <taxon>Alphaproteobacteria</taxon>
        <taxon>Acetobacterales</taxon>
        <taxon>Acetobacteraceae</taxon>
        <taxon>Granulibacter</taxon>
    </lineage>
</organism>
<reference key="1">
    <citation type="journal article" date="2007" name="J. Bacteriol.">
        <title>Genome sequence analysis of the emerging human pathogenic acetic acid bacterium Granulibacter bethesdensis.</title>
        <authorList>
            <person name="Greenberg D.E."/>
            <person name="Porcella S.F."/>
            <person name="Zelazny A.M."/>
            <person name="Virtaneva K."/>
            <person name="Sturdevant D.E."/>
            <person name="Kupko J.J. III"/>
            <person name="Barbian K.D."/>
            <person name="Babar A."/>
            <person name="Dorward D.W."/>
            <person name="Holland S.M."/>
        </authorList>
    </citation>
    <scope>NUCLEOTIDE SEQUENCE [LARGE SCALE GENOMIC DNA]</scope>
    <source>
        <strain>ATCC BAA-1260 / CGDNIH1</strain>
    </source>
</reference>
<comment type="function">
    <text evidence="1">Catalyzes the attachment of threonine to tRNA(Thr) in a two-step reaction: L-threonine is first activated by ATP to form Thr-AMP and then transferred to the acceptor end of tRNA(Thr). Also edits incorrectly charged L-seryl-tRNA(Thr).</text>
</comment>
<comment type="catalytic activity">
    <reaction evidence="1">
        <text>tRNA(Thr) + L-threonine + ATP = L-threonyl-tRNA(Thr) + AMP + diphosphate + H(+)</text>
        <dbReference type="Rhea" id="RHEA:24624"/>
        <dbReference type="Rhea" id="RHEA-COMP:9670"/>
        <dbReference type="Rhea" id="RHEA-COMP:9704"/>
        <dbReference type="ChEBI" id="CHEBI:15378"/>
        <dbReference type="ChEBI" id="CHEBI:30616"/>
        <dbReference type="ChEBI" id="CHEBI:33019"/>
        <dbReference type="ChEBI" id="CHEBI:57926"/>
        <dbReference type="ChEBI" id="CHEBI:78442"/>
        <dbReference type="ChEBI" id="CHEBI:78534"/>
        <dbReference type="ChEBI" id="CHEBI:456215"/>
        <dbReference type="EC" id="6.1.1.3"/>
    </reaction>
</comment>
<comment type="cofactor">
    <cofactor evidence="1">
        <name>Zn(2+)</name>
        <dbReference type="ChEBI" id="CHEBI:29105"/>
    </cofactor>
    <text evidence="1">Binds 1 zinc ion per subunit.</text>
</comment>
<comment type="subunit">
    <text evidence="1">Homodimer.</text>
</comment>
<comment type="subcellular location">
    <subcellularLocation>
        <location evidence="1">Cytoplasm</location>
    </subcellularLocation>
</comment>
<comment type="similarity">
    <text evidence="1">Belongs to the class-II aminoacyl-tRNA synthetase family.</text>
</comment>
<evidence type="ECO:0000255" key="1">
    <source>
        <dbReference type="HAMAP-Rule" id="MF_00184"/>
    </source>
</evidence>
<evidence type="ECO:0000255" key="2">
    <source>
        <dbReference type="PROSITE-ProRule" id="PRU01228"/>
    </source>
</evidence>
<name>SYT_GRABC</name>
<accession>Q0BRP0</accession>
<dbReference type="EC" id="6.1.1.3" evidence="1"/>
<dbReference type="EMBL" id="CP000394">
    <property type="protein sequence ID" value="ABI62512.1"/>
    <property type="molecule type" value="Genomic_DNA"/>
</dbReference>
<dbReference type="RefSeq" id="WP_011632316.1">
    <property type="nucleotide sequence ID" value="NC_008343.2"/>
</dbReference>
<dbReference type="SMR" id="Q0BRP0"/>
<dbReference type="STRING" id="391165.GbCGDNIH1_1614"/>
<dbReference type="KEGG" id="gbe:GbCGDNIH1_1614"/>
<dbReference type="eggNOG" id="COG0441">
    <property type="taxonomic scope" value="Bacteria"/>
</dbReference>
<dbReference type="HOGENOM" id="CLU_008554_0_1_5"/>
<dbReference type="OrthoDB" id="9802304at2"/>
<dbReference type="Proteomes" id="UP000001963">
    <property type="component" value="Chromosome"/>
</dbReference>
<dbReference type="GO" id="GO:0005737">
    <property type="term" value="C:cytoplasm"/>
    <property type="evidence" value="ECO:0007669"/>
    <property type="project" value="UniProtKB-SubCell"/>
</dbReference>
<dbReference type="GO" id="GO:0005524">
    <property type="term" value="F:ATP binding"/>
    <property type="evidence" value="ECO:0007669"/>
    <property type="project" value="UniProtKB-UniRule"/>
</dbReference>
<dbReference type="GO" id="GO:0046872">
    <property type="term" value="F:metal ion binding"/>
    <property type="evidence" value="ECO:0007669"/>
    <property type="project" value="UniProtKB-KW"/>
</dbReference>
<dbReference type="GO" id="GO:0004829">
    <property type="term" value="F:threonine-tRNA ligase activity"/>
    <property type="evidence" value="ECO:0007669"/>
    <property type="project" value="UniProtKB-UniRule"/>
</dbReference>
<dbReference type="GO" id="GO:0000049">
    <property type="term" value="F:tRNA binding"/>
    <property type="evidence" value="ECO:0007669"/>
    <property type="project" value="UniProtKB-KW"/>
</dbReference>
<dbReference type="GO" id="GO:0006435">
    <property type="term" value="P:threonyl-tRNA aminoacylation"/>
    <property type="evidence" value="ECO:0007669"/>
    <property type="project" value="UniProtKB-UniRule"/>
</dbReference>
<dbReference type="CDD" id="cd01667">
    <property type="entry name" value="TGS_ThrRS"/>
    <property type="match status" value="1"/>
</dbReference>
<dbReference type="CDD" id="cd00860">
    <property type="entry name" value="ThrRS_anticodon"/>
    <property type="match status" value="1"/>
</dbReference>
<dbReference type="CDD" id="cd00771">
    <property type="entry name" value="ThrRS_core"/>
    <property type="match status" value="1"/>
</dbReference>
<dbReference type="FunFam" id="3.10.20.30:FF:000005">
    <property type="entry name" value="Threonine--tRNA ligase"/>
    <property type="match status" value="1"/>
</dbReference>
<dbReference type="FunFam" id="3.30.54.20:FF:000002">
    <property type="entry name" value="Threonine--tRNA ligase"/>
    <property type="match status" value="1"/>
</dbReference>
<dbReference type="FunFam" id="3.30.930.10:FF:000002">
    <property type="entry name" value="Threonine--tRNA ligase"/>
    <property type="match status" value="1"/>
</dbReference>
<dbReference type="FunFam" id="3.40.50.800:FF:000001">
    <property type="entry name" value="Threonine--tRNA ligase"/>
    <property type="match status" value="1"/>
</dbReference>
<dbReference type="FunFam" id="3.30.980.10:FF:000005">
    <property type="entry name" value="Threonyl-tRNA synthetase, mitochondrial"/>
    <property type="match status" value="1"/>
</dbReference>
<dbReference type="Gene3D" id="3.10.20.30">
    <property type="match status" value="1"/>
</dbReference>
<dbReference type="Gene3D" id="3.30.54.20">
    <property type="match status" value="1"/>
</dbReference>
<dbReference type="Gene3D" id="3.40.50.800">
    <property type="entry name" value="Anticodon-binding domain"/>
    <property type="match status" value="1"/>
</dbReference>
<dbReference type="Gene3D" id="3.30.930.10">
    <property type="entry name" value="Bira Bifunctional Protein, Domain 2"/>
    <property type="match status" value="1"/>
</dbReference>
<dbReference type="Gene3D" id="3.30.980.10">
    <property type="entry name" value="Threonyl-trna Synthetase, Chain A, domain 2"/>
    <property type="match status" value="1"/>
</dbReference>
<dbReference type="HAMAP" id="MF_00184">
    <property type="entry name" value="Thr_tRNA_synth"/>
    <property type="match status" value="1"/>
</dbReference>
<dbReference type="InterPro" id="IPR002314">
    <property type="entry name" value="aa-tRNA-synt_IIb"/>
</dbReference>
<dbReference type="InterPro" id="IPR006195">
    <property type="entry name" value="aa-tRNA-synth_II"/>
</dbReference>
<dbReference type="InterPro" id="IPR045864">
    <property type="entry name" value="aa-tRNA-synth_II/BPL/LPL"/>
</dbReference>
<dbReference type="InterPro" id="IPR004154">
    <property type="entry name" value="Anticodon-bd"/>
</dbReference>
<dbReference type="InterPro" id="IPR036621">
    <property type="entry name" value="Anticodon-bd_dom_sf"/>
</dbReference>
<dbReference type="InterPro" id="IPR012675">
    <property type="entry name" value="Beta-grasp_dom_sf"/>
</dbReference>
<dbReference type="InterPro" id="IPR004095">
    <property type="entry name" value="TGS"/>
</dbReference>
<dbReference type="InterPro" id="IPR012676">
    <property type="entry name" value="TGS-like"/>
</dbReference>
<dbReference type="InterPro" id="IPR002320">
    <property type="entry name" value="Thr-tRNA-ligase_IIa"/>
</dbReference>
<dbReference type="InterPro" id="IPR018163">
    <property type="entry name" value="Thr/Ala-tRNA-synth_IIc_edit"/>
</dbReference>
<dbReference type="InterPro" id="IPR047246">
    <property type="entry name" value="ThrRS_anticodon"/>
</dbReference>
<dbReference type="InterPro" id="IPR033728">
    <property type="entry name" value="ThrRS_core"/>
</dbReference>
<dbReference type="InterPro" id="IPR012947">
    <property type="entry name" value="tRNA_SAD"/>
</dbReference>
<dbReference type="NCBIfam" id="TIGR00418">
    <property type="entry name" value="thrS"/>
    <property type="match status" value="1"/>
</dbReference>
<dbReference type="PANTHER" id="PTHR11451:SF44">
    <property type="entry name" value="THREONINE--TRNA LIGASE, CHLOROPLASTIC_MITOCHONDRIAL 2"/>
    <property type="match status" value="1"/>
</dbReference>
<dbReference type="PANTHER" id="PTHR11451">
    <property type="entry name" value="THREONINE-TRNA LIGASE"/>
    <property type="match status" value="1"/>
</dbReference>
<dbReference type="Pfam" id="PF03129">
    <property type="entry name" value="HGTP_anticodon"/>
    <property type="match status" value="1"/>
</dbReference>
<dbReference type="Pfam" id="PF02824">
    <property type="entry name" value="TGS"/>
    <property type="match status" value="1"/>
</dbReference>
<dbReference type="Pfam" id="PF00587">
    <property type="entry name" value="tRNA-synt_2b"/>
    <property type="match status" value="1"/>
</dbReference>
<dbReference type="Pfam" id="PF07973">
    <property type="entry name" value="tRNA_SAD"/>
    <property type="match status" value="1"/>
</dbReference>
<dbReference type="PRINTS" id="PR01047">
    <property type="entry name" value="TRNASYNTHTHR"/>
</dbReference>
<dbReference type="SMART" id="SM00863">
    <property type="entry name" value="tRNA_SAD"/>
    <property type="match status" value="1"/>
</dbReference>
<dbReference type="SUPFAM" id="SSF52954">
    <property type="entry name" value="Class II aaRS ABD-related"/>
    <property type="match status" value="1"/>
</dbReference>
<dbReference type="SUPFAM" id="SSF55681">
    <property type="entry name" value="Class II aaRS and biotin synthetases"/>
    <property type="match status" value="1"/>
</dbReference>
<dbReference type="SUPFAM" id="SSF81271">
    <property type="entry name" value="TGS-like"/>
    <property type="match status" value="1"/>
</dbReference>
<dbReference type="SUPFAM" id="SSF55186">
    <property type="entry name" value="ThrRS/AlaRS common domain"/>
    <property type="match status" value="1"/>
</dbReference>
<dbReference type="PROSITE" id="PS50862">
    <property type="entry name" value="AA_TRNA_LIGASE_II"/>
    <property type="match status" value="1"/>
</dbReference>
<dbReference type="PROSITE" id="PS51880">
    <property type="entry name" value="TGS"/>
    <property type="match status" value="1"/>
</dbReference>
<sequence>MPAITLPDGSVRHYDAPVTGTTIAADIGPGLARAALAMKVDGRMMDLSRAIAADAQVVFVTRKDEAALEMIRHDAAHVLAEAVQELFPGTQVTIGPSIENGFYYDFARNEPFTPEDLPAIEAKMREIIARNAPFEREVWDRQDAIRFFQDKGEKYKAQLIQDLPDTETITVYRQGEWLDLCRGPHMRSTGDIGPAFRLMKVAGAYWRGDHRNAMLSRIYGTAWRDQKELDAYLHQLEEAERRDHRRLGKEMDLFHIQEEAVGSIFWHKKGWRLYRALENYMRRRQIEAGYEEVRTPQLVDRSLWEDSGHWDKYREHMFIATVEDEEKTLALKPMNCPCHVQIFRHGLRSYKELPLRMAEFGACHRYEPSGALHGIMRVRSFTQDDAHIFCMPEQIAKETADFVAMLASVYRDLGFDSFRVKFADRPESRAGKDEDWDRAEHELREACRLAGVEYELNPGEGAFYGPKLEFVLRDAIGRDWQCGTLQVDYVLPERLNAEYVAEDGARRRPVMLHRAILGSFERFIGILIEQYAGRFPLWLAPVPVVVAPIVSDANAYAMEVVTALKRAGVTWAEADLRNEKINAKIREHSLAHVPVILVVGRREAEQRQVALRRLGSQEQQVMALDEAISALATEATPPDLRQ</sequence>